<feature type="chain" id="PRO_0000425702" description="Spore germination protein GerLA">
    <location>
        <begin position="1"/>
        <end position="492"/>
    </location>
</feature>
<feature type="transmembrane region" description="Helical" evidence="1">
    <location>
        <begin position="295"/>
        <end position="315"/>
    </location>
</feature>
<feature type="transmembrane region" description="Helical" evidence="1">
    <location>
        <begin position="384"/>
        <end position="404"/>
    </location>
</feature>
<feature type="transmembrane region" description="Helical" evidence="1">
    <location>
        <begin position="410"/>
        <end position="430"/>
    </location>
</feature>
<organism>
    <name type="scientific">Bacillus cereus</name>
    <dbReference type="NCBI Taxonomy" id="1396"/>
    <lineage>
        <taxon>Bacteria</taxon>
        <taxon>Bacillati</taxon>
        <taxon>Bacillota</taxon>
        <taxon>Bacilli</taxon>
        <taxon>Bacillales</taxon>
        <taxon>Bacillaceae</taxon>
        <taxon>Bacillus</taxon>
        <taxon>Bacillus cereus group</taxon>
    </lineage>
</organism>
<gene>
    <name type="primary">gerLA</name>
</gene>
<keyword id="KW-0309">Germination</keyword>
<keyword id="KW-0472">Membrane</keyword>
<keyword id="KW-0812">Transmembrane</keyword>
<keyword id="KW-1133">Transmembrane helix</keyword>
<accession>Q93N70</accession>
<dbReference type="EMBL" id="AF387344">
    <property type="protein sequence ID" value="AAK70461.1"/>
    <property type="molecule type" value="Genomic_DNA"/>
</dbReference>
<dbReference type="SMR" id="Q93N70"/>
<dbReference type="eggNOG" id="COG0697">
    <property type="taxonomic scope" value="Bacteria"/>
</dbReference>
<dbReference type="GO" id="GO:0016020">
    <property type="term" value="C:membrane"/>
    <property type="evidence" value="ECO:0007669"/>
    <property type="project" value="UniProtKB-SubCell"/>
</dbReference>
<dbReference type="GO" id="GO:0009847">
    <property type="term" value="P:spore germination"/>
    <property type="evidence" value="ECO:0007669"/>
    <property type="project" value="InterPro"/>
</dbReference>
<dbReference type="InterPro" id="IPR004995">
    <property type="entry name" value="Spore_Ger"/>
</dbReference>
<dbReference type="InterPro" id="IPR050768">
    <property type="entry name" value="UPF0353/GerABKA_families"/>
</dbReference>
<dbReference type="PANTHER" id="PTHR22550:SF5">
    <property type="entry name" value="LEUCINE ZIPPER PROTEIN 4"/>
    <property type="match status" value="1"/>
</dbReference>
<dbReference type="PANTHER" id="PTHR22550">
    <property type="entry name" value="SPORE GERMINATION PROTEIN"/>
    <property type="match status" value="1"/>
</dbReference>
<dbReference type="Pfam" id="PF03323">
    <property type="entry name" value="GerA"/>
    <property type="match status" value="1"/>
</dbReference>
<dbReference type="PIRSF" id="PIRSF005690">
    <property type="entry name" value="GerBA"/>
    <property type="match status" value="1"/>
</dbReference>
<name>GERLA_BACCE</name>
<comment type="function">
    <text evidence="2">Contributes to the L-alanine germination response.</text>
</comment>
<comment type="subcellular location">
    <subcellularLocation>
        <location evidence="3">Membrane</location>
        <topology evidence="3">Multi-pass membrane protein</topology>
    </subcellularLocation>
</comment>
<comment type="similarity">
    <text evidence="3">Belongs to the GerABKA family.</text>
</comment>
<reference key="1">
    <citation type="journal article" date="2002" name="Microbiology">
        <title>Germination of Bacillus cereus spores in response to L-alanine and to inosine: the roles of gerL and gerQ operons.</title>
        <authorList>
            <person name="Barlass P.J."/>
            <person name="Houston C.W."/>
            <person name="Clements M.O."/>
            <person name="Moir A."/>
        </authorList>
    </citation>
    <scope>NUCLEOTIDE SEQUENCE [GENOMIC DNA]</scope>
    <scope>FUNCTION</scope>
    <source>
        <strain>ATCC 10876 / DSM 9378 / NRRL B-569</strain>
    </source>
</reference>
<proteinExistence type="inferred from homology"/>
<evidence type="ECO:0000255" key="1"/>
<evidence type="ECO:0000269" key="2">
    <source>
    </source>
</evidence>
<evidence type="ECO:0000305" key="3"/>
<sequence>MGKLLELEGNLFEVMKEIRDELGSPNDLTIREVALAGSFTRCAVVFLCGLTDKDNVYKYVVRTLQYEEVQNEAAVVQTLLDRFISIAEVGKKTTFPDIINAILAGDTVILIDNIQTAIIINSRAWEKRSLEPPVTEDLIRGPRVGLNEDINVNKMLIRRSLRDPKLRFQSYIMGKRSQKEVTLVYIEDIINPHIVKELDRRLQSIVTDVVLETGTIEQLIQDNNLSPFPQFLNTERPDNIIASLAKGKAAILVDGSPFALIAPLVFVDIFQSVEDHYERWVIGTLLRFLRMGSGIIAVLLPAMYVALVSYHQGLIPSKLAYSIAGAREGVPFPAYIETLMMALTMELIREAGIRLPKPMGQTIGIVGGLVIGEAAVNAGIVNPFLVIIIAVTAIATFSLPVYSITITFRILLFVFVLAATAFGLYGIILALIALAIHITNLTSVGIPYTTPIAPAFYKDWKEEFIRMPKSMLKDRPEYLQTKDSTIRPKERK</sequence>
<protein>
    <recommendedName>
        <fullName>Spore germination protein GerLA</fullName>
    </recommendedName>
</protein>